<reference key="1">
    <citation type="submission" date="2007-05" db="EMBL/GenBank/DDBJ databases">
        <title>Complete sequence of chromosome of Acidiphilium cryptum JF-5.</title>
        <authorList>
            <consortium name="US DOE Joint Genome Institute"/>
            <person name="Copeland A."/>
            <person name="Lucas S."/>
            <person name="Lapidus A."/>
            <person name="Barry K."/>
            <person name="Detter J.C."/>
            <person name="Glavina del Rio T."/>
            <person name="Hammon N."/>
            <person name="Israni S."/>
            <person name="Dalin E."/>
            <person name="Tice H."/>
            <person name="Pitluck S."/>
            <person name="Sims D."/>
            <person name="Brettin T."/>
            <person name="Bruce D."/>
            <person name="Han C."/>
            <person name="Schmutz J."/>
            <person name="Larimer F."/>
            <person name="Land M."/>
            <person name="Hauser L."/>
            <person name="Kyrpides N."/>
            <person name="Kim E."/>
            <person name="Magnuson T."/>
            <person name="Richardson P."/>
        </authorList>
    </citation>
    <scope>NUCLEOTIDE SEQUENCE [LARGE SCALE GENOMIC DNA]</scope>
    <source>
        <strain>JF-5</strain>
    </source>
</reference>
<sequence>MNEILVVTVNEVANARIARVVGPVYGTSIRSRTIVGNMLGGIRAIFGGSQEGYIAMVNQTRDEAIAALKAHAASLGANAVIGMRFDSGEFDAGQGQAMNEVTAYGTAVILEAVM</sequence>
<organism>
    <name type="scientific">Acidiphilium cryptum (strain JF-5)</name>
    <dbReference type="NCBI Taxonomy" id="349163"/>
    <lineage>
        <taxon>Bacteria</taxon>
        <taxon>Pseudomonadati</taxon>
        <taxon>Pseudomonadota</taxon>
        <taxon>Alphaproteobacteria</taxon>
        <taxon>Acetobacterales</taxon>
        <taxon>Acidocellaceae</taxon>
        <taxon>Acidiphilium</taxon>
    </lineage>
</organism>
<dbReference type="EMBL" id="CP000697">
    <property type="protein sequence ID" value="ABQ30956.1"/>
    <property type="molecule type" value="Genomic_DNA"/>
</dbReference>
<dbReference type="RefSeq" id="WP_011942465.1">
    <property type="nucleotide sequence ID" value="NC_009484.1"/>
</dbReference>
<dbReference type="SMR" id="A5FZC4"/>
<dbReference type="STRING" id="349163.Acry_1752"/>
<dbReference type="KEGG" id="acr:Acry_1752"/>
<dbReference type="eggNOG" id="COG0393">
    <property type="taxonomic scope" value="Bacteria"/>
</dbReference>
<dbReference type="HOGENOM" id="CLU_117144_1_1_5"/>
<dbReference type="Proteomes" id="UP000000245">
    <property type="component" value="Chromosome"/>
</dbReference>
<dbReference type="Gene3D" id="3.30.110.70">
    <property type="entry name" value="Hypothetical protein apc22750. Chain B"/>
    <property type="match status" value="1"/>
</dbReference>
<dbReference type="HAMAP" id="MF_00338">
    <property type="entry name" value="UPF0145"/>
    <property type="match status" value="1"/>
</dbReference>
<dbReference type="InterPro" id="IPR035439">
    <property type="entry name" value="UPF0145_dom_sf"/>
</dbReference>
<dbReference type="InterPro" id="IPR002765">
    <property type="entry name" value="UPF0145_YbjQ-like"/>
</dbReference>
<dbReference type="PANTHER" id="PTHR34068:SF2">
    <property type="entry name" value="UPF0145 PROTEIN SCO3412"/>
    <property type="match status" value="1"/>
</dbReference>
<dbReference type="PANTHER" id="PTHR34068">
    <property type="entry name" value="UPF0145 PROTEIN YBJQ"/>
    <property type="match status" value="1"/>
</dbReference>
<dbReference type="Pfam" id="PF01906">
    <property type="entry name" value="YbjQ_1"/>
    <property type="match status" value="1"/>
</dbReference>
<dbReference type="SUPFAM" id="SSF117782">
    <property type="entry name" value="YbjQ-like"/>
    <property type="match status" value="1"/>
</dbReference>
<keyword id="KW-1185">Reference proteome</keyword>
<feature type="chain" id="PRO_1000012971" description="UPF0145 protein Acry_1752">
    <location>
        <begin position="1"/>
        <end position="114"/>
    </location>
</feature>
<proteinExistence type="inferred from homology"/>
<evidence type="ECO:0000255" key="1">
    <source>
        <dbReference type="HAMAP-Rule" id="MF_00338"/>
    </source>
</evidence>
<comment type="similarity">
    <text evidence="1">Belongs to the UPF0145 family.</text>
</comment>
<name>Y1752_ACICJ</name>
<gene>
    <name type="ordered locus">Acry_1752</name>
</gene>
<protein>
    <recommendedName>
        <fullName evidence="1">UPF0145 protein Acry_1752</fullName>
    </recommendedName>
</protein>
<accession>A5FZC4</accession>